<protein>
    <recommendedName>
        <fullName evidence="1">Large ribosomal subunit protein bL25</fullName>
    </recommendedName>
    <alternativeName>
        <fullName evidence="2">50S ribosomal protein L25</fullName>
    </alternativeName>
</protein>
<reference key="1">
    <citation type="journal article" date="2002" name="DNA Res.">
        <title>Complete genome structure of the thermophilic cyanobacterium Thermosynechococcus elongatus BP-1.</title>
        <authorList>
            <person name="Nakamura Y."/>
            <person name="Kaneko T."/>
            <person name="Sato S."/>
            <person name="Ikeuchi M."/>
            <person name="Katoh H."/>
            <person name="Sasamoto S."/>
            <person name="Watanabe A."/>
            <person name="Iriguchi M."/>
            <person name="Kawashima K."/>
            <person name="Kimura T."/>
            <person name="Kishida Y."/>
            <person name="Kiyokawa C."/>
            <person name="Kohara M."/>
            <person name="Matsumoto M."/>
            <person name="Matsuno A."/>
            <person name="Nakazaki N."/>
            <person name="Shimpo S."/>
            <person name="Sugimoto M."/>
            <person name="Takeuchi C."/>
            <person name="Yamada M."/>
            <person name="Tabata S."/>
        </authorList>
    </citation>
    <scope>NUCLEOTIDE SEQUENCE [LARGE SCALE GENOMIC DNA]</scope>
    <source>
        <strain>NIES-2133 / IAM M-273 / BP-1</strain>
    </source>
</reference>
<evidence type="ECO:0000255" key="1">
    <source>
        <dbReference type="HAMAP-Rule" id="MF_01336"/>
    </source>
</evidence>
<evidence type="ECO:0000305" key="2"/>
<sequence length="101" mass="11064">MSRSLAIEGQLRPADAKPNALRRNGKIPAVLYGPTIESSISLVVDTRAAELLVRDARPQKTPIQLSIPDLPWQGTVVLQEVQAHPAKDTLYHLSFLAKAEN</sequence>
<dbReference type="EMBL" id="BA000039">
    <property type="protein sequence ID" value="BAC08082.1"/>
    <property type="molecule type" value="Genomic_DNA"/>
</dbReference>
<dbReference type="RefSeq" id="NP_681320.1">
    <property type="nucleotide sequence ID" value="NC_004113.1"/>
</dbReference>
<dbReference type="RefSeq" id="WP_011056380.1">
    <property type="nucleotide sequence ID" value="NC_004113.1"/>
</dbReference>
<dbReference type="SMR" id="Q8DLG3"/>
<dbReference type="STRING" id="197221.gene:10747119"/>
<dbReference type="EnsemblBacteria" id="BAC08082">
    <property type="protein sequence ID" value="BAC08082"/>
    <property type="gene ID" value="BAC08082"/>
</dbReference>
<dbReference type="KEGG" id="tel:tll0530"/>
<dbReference type="PATRIC" id="fig|197221.4.peg.559"/>
<dbReference type="eggNOG" id="COG1825">
    <property type="taxonomic scope" value="Bacteria"/>
</dbReference>
<dbReference type="Proteomes" id="UP000000440">
    <property type="component" value="Chromosome"/>
</dbReference>
<dbReference type="GO" id="GO:1990904">
    <property type="term" value="C:ribonucleoprotein complex"/>
    <property type="evidence" value="ECO:0007669"/>
    <property type="project" value="UniProtKB-KW"/>
</dbReference>
<dbReference type="GO" id="GO:0005840">
    <property type="term" value="C:ribosome"/>
    <property type="evidence" value="ECO:0007669"/>
    <property type="project" value="UniProtKB-KW"/>
</dbReference>
<dbReference type="GO" id="GO:0008097">
    <property type="term" value="F:5S rRNA binding"/>
    <property type="evidence" value="ECO:0007669"/>
    <property type="project" value="InterPro"/>
</dbReference>
<dbReference type="GO" id="GO:0003735">
    <property type="term" value="F:structural constituent of ribosome"/>
    <property type="evidence" value="ECO:0007669"/>
    <property type="project" value="InterPro"/>
</dbReference>
<dbReference type="GO" id="GO:0006412">
    <property type="term" value="P:translation"/>
    <property type="evidence" value="ECO:0007669"/>
    <property type="project" value="UniProtKB-UniRule"/>
</dbReference>
<dbReference type="CDD" id="cd00495">
    <property type="entry name" value="Ribosomal_L25_TL5_CTC"/>
    <property type="match status" value="1"/>
</dbReference>
<dbReference type="Gene3D" id="2.40.240.10">
    <property type="entry name" value="Ribosomal Protein L25, Chain P"/>
    <property type="match status" value="1"/>
</dbReference>
<dbReference type="HAMAP" id="MF_01336">
    <property type="entry name" value="Ribosomal_bL25"/>
    <property type="match status" value="1"/>
</dbReference>
<dbReference type="InterPro" id="IPR020056">
    <property type="entry name" value="Rbsml_bL25/Gln-tRNA_synth_N"/>
</dbReference>
<dbReference type="InterPro" id="IPR011035">
    <property type="entry name" value="Ribosomal_bL25/Gln-tRNA_synth"/>
</dbReference>
<dbReference type="InterPro" id="IPR020055">
    <property type="entry name" value="Ribosomal_bL25_short"/>
</dbReference>
<dbReference type="InterPro" id="IPR029751">
    <property type="entry name" value="Ribosomal_L25_dom"/>
</dbReference>
<dbReference type="NCBIfam" id="NF004612">
    <property type="entry name" value="PRK05943.1"/>
    <property type="match status" value="1"/>
</dbReference>
<dbReference type="Pfam" id="PF01386">
    <property type="entry name" value="Ribosomal_L25p"/>
    <property type="match status" value="1"/>
</dbReference>
<dbReference type="SUPFAM" id="SSF50715">
    <property type="entry name" value="Ribosomal protein L25-like"/>
    <property type="match status" value="1"/>
</dbReference>
<feature type="chain" id="PRO_0000181496" description="Large ribosomal subunit protein bL25">
    <location>
        <begin position="1"/>
        <end position="101"/>
    </location>
</feature>
<gene>
    <name evidence="1" type="primary">rplY</name>
    <name type="synonym">rpl25</name>
    <name type="ordered locus">tll0530</name>
</gene>
<name>RL25_THEVB</name>
<organism>
    <name type="scientific">Thermosynechococcus vestitus (strain NIES-2133 / IAM M-273 / BP-1)</name>
    <dbReference type="NCBI Taxonomy" id="197221"/>
    <lineage>
        <taxon>Bacteria</taxon>
        <taxon>Bacillati</taxon>
        <taxon>Cyanobacteriota</taxon>
        <taxon>Cyanophyceae</taxon>
        <taxon>Acaryochloridales</taxon>
        <taxon>Thermosynechococcaceae</taxon>
        <taxon>Thermosynechococcus</taxon>
    </lineage>
</organism>
<accession>Q8DLG3</accession>
<proteinExistence type="inferred from homology"/>
<comment type="function">
    <text evidence="1">This is one of the proteins that binds to the 5S RNA in the ribosome where it forms part of the central protuberance.</text>
</comment>
<comment type="subunit">
    <text evidence="1">Part of the 50S ribosomal subunit; part of the 5S rRNA/L5/L18/L25 subcomplex. Contacts the 5S rRNA. Binds to the 5S rRNA independently of L5 and L18.</text>
</comment>
<comment type="similarity">
    <text evidence="1">Belongs to the bacterial ribosomal protein bL25 family.</text>
</comment>
<keyword id="KW-1185">Reference proteome</keyword>
<keyword id="KW-0687">Ribonucleoprotein</keyword>
<keyword id="KW-0689">Ribosomal protein</keyword>
<keyword id="KW-0694">RNA-binding</keyword>
<keyword id="KW-0699">rRNA-binding</keyword>